<comment type="function">
    <text evidence="1">Responsible for synthesis of pseudouridine from uracil-55 in the psi GC loop of transfer RNAs.</text>
</comment>
<comment type="catalytic activity">
    <reaction evidence="1">
        <text>uridine(55) in tRNA = pseudouridine(55) in tRNA</text>
        <dbReference type="Rhea" id="RHEA:42532"/>
        <dbReference type="Rhea" id="RHEA-COMP:10101"/>
        <dbReference type="Rhea" id="RHEA-COMP:10102"/>
        <dbReference type="ChEBI" id="CHEBI:65314"/>
        <dbReference type="ChEBI" id="CHEBI:65315"/>
        <dbReference type="EC" id="5.4.99.25"/>
    </reaction>
</comment>
<comment type="similarity">
    <text evidence="1">Belongs to the pseudouridine synthase TruB family. Type 1 subfamily.</text>
</comment>
<reference key="1">
    <citation type="journal article" date="2000" name="Nucleic Acids Res.">
        <title>Genome sequences of Chlamydia trachomatis MoPn and Chlamydia pneumoniae AR39.</title>
        <authorList>
            <person name="Read T.D."/>
            <person name="Brunham R.C."/>
            <person name="Shen C."/>
            <person name="Gill S.R."/>
            <person name="Heidelberg J.F."/>
            <person name="White O."/>
            <person name="Hickey E.K."/>
            <person name="Peterson J.D."/>
            <person name="Utterback T.R."/>
            <person name="Berry K.J."/>
            <person name="Bass S."/>
            <person name="Linher K.D."/>
            <person name="Weidman J.F."/>
            <person name="Khouri H.M."/>
            <person name="Craven B."/>
            <person name="Bowman C."/>
            <person name="Dodson R.J."/>
            <person name="Gwinn M.L."/>
            <person name="Nelson W.C."/>
            <person name="DeBoy R.T."/>
            <person name="Kolonay J.F."/>
            <person name="McClarty G."/>
            <person name="Salzberg S.L."/>
            <person name="Eisen J.A."/>
            <person name="Fraser C.M."/>
        </authorList>
    </citation>
    <scope>NUCLEOTIDE SEQUENCE [LARGE SCALE GENOMIC DNA]</scope>
    <source>
        <strain>MoPn / Nigg</strain>
    </source>
</reference>
<keyword id="KW-0413">Isomerase</keyword>
<keyword id="KW-0819">tRNA processing</keyword>
<organism>
    <name type="scientific">Chlamydia muridarum (strain MoPn / Nigg)</name>
    <dbReference type="NCBI Taxonomy" id="243161"/>
    <lineage>
        <taxon>Bacteria</taxon>
        <taxon>Pseudomonadati</taxon>
        <taxon>Chlamydiota</taxon>
        <taxon>Chlamydiia</taxon>
        <taxon>Chlamydiales</taxon>
        <taxon>Chlamydiaceae</taxon>
        <taxon>Chlamydia/Chlamydophila group</taxon>
        <taxon>Chlamydia</taxon>
    </lineage>
</organism>
<evidence type="ECO:0000255" key="1">
    <source>
        <dbReference type="HAMAP-Rule" id="MF_01080"/>
    </source>
</evidence>
<sequence length="241" mass="27047">MELATEPIEGVLLVDKPQGRTSFSLIRSLVRLIGVKKIGHAGTLDPFATGVMVMLIGRKFTRLSDIMLFEDKEYSAVAHLGTTTDTYDCDGKIVGRSKKVPTMEEVLECTSYFQGEIQQVPPMFSAKKVQGKKLYEYARQGLSIERSFATVRVDLRLIKYEYPRLHFVVKCSKGTYIRSIAHELGNMLGCGAYLEELRRLRSGNFSIDQCIDGNHLDEPGFDVFPHLRDANGLILQPTPVL</sequence>
<dbReference type="EC" id="5.4.99.25" evidence="1"/>
<dbReference type="EMBL" id="AE002160">
    <property type="status" value="NOT_ANNOTATED_CDS"/>
    <property type="molecule type" value="Genomic_DNA"/>
</dbReference>
<dbReference type="PIR" id="F81709">
    <property type="entry name" value="F81709"/>
</dbReference>
<dbReference type="RefSeq" id="WP_010230262.1">
    <property type="nucleotide sequence ID" value="NZ_CP063055.1"/>
</dbReference>
<dbReference type="SMR" id="Q9PKU2"/>
<dbReference type="GeneID" id="23334617"/>
<dbReference type="OrthoDB" id="9802309at2"/>
<dbReference type="Proteomes" id="UP000000800">
    <property type="component" value="Chromosome"/>
</dbReference>
<dbReference type="GO" id="GO:0003723">
    <property type="term" value="F:RNA binding"/>
    <property type="evidence" value="ECO:0007669"/>
    <property type="project" value="InterPro"/>
</dbReference>
<dbReference type="GO" id="GO:0160148">
    <property type="term" value="F:tRNA pseudouridine(55) synthase activity"/>
    <property type="evidence" value="ECO:0007669"/>
    <property type="project" value="UniProtKB-EC"/>
</dbReference>
<dbReference type="GO" id="GO:1990481">
    <property type="term" value="P:mRNA pseudouridine synthesis"/>
    <property type="evidence" value="ECO:0007669"/>
    <property type="project" value="TreeGrafter"/>
</dbReference>
<dbReference type="GO" id="GO:0031119">
    <property type="term" value="P:tRNA pseudouridine synthesis"/>
    <property type="evidence" value="ECO:0007669"/>
    <property type="project" value="UniProtKB-UniRule"/>
</dbReference>
<dbReference type="CDD" id="cd02573">
    <property type="entry name" value="PseudoU_synth_EcTruB"/>
    <property type="match status" value="1"/>
</dbReference>
<dbReference type="Gene3D" id="3.30.2350.10">
    <property type="entry name" value="Pseudouridine synthase"/>
    <property type="match status" value="1"/>
</dbReference>
<dbReference type="HAMAP" id="MF_01080">
    <property type="entry name" value="TruB_bact"/>
    <property type="match status" value="1"/>
</dbReference>
<dbReference type="InterPro" id="IPR020103">
    <property type="entry name" value="PsdUridine_synth_cat_dom_sf"/>
</dbReference>
<dbReference type="InterPro" id="IPR002501">
    <property type="entry name" value="PsdUridine_synth_N"/>
</dbReference>
<dbReference type="InterPro" id="IPR014780">
    <property type="entry name" value="tRNA_psdUridine_synth_TruB"/>
</dbReference>
<dbReference type="InterPro" id="IPR032819">
    <property type="entry name" value="TruB_C"/>
</dbReference>
<dbReference type="NCBIfam" id="TIGR00431">
    <property type="entry name" value="TruB"/>
    <property type="match status" value="1"/>
</dbReference>
<dbReference type="PANTHER" id="PTHR13767:SF2">
    <property type="entry name" value="PSEUDOURIDYLATE SYNTHASE TRUB1"/>
    <property type="match status" value="1"/>
</dbReference>
<dbReference type="PANTHER" id="PTHR13767">
    <property type="entry name" value="TRNA-PSEUDOURIDINE SYNTHASE"/>
    <property type="match status" value="1"/>
</dbReference>
<dbReference type="Pfam" id="PF16198">
    <property type="entry name" value="TruB_C_2"/>
    <property type="match status" value="1"/>
</dbReference>
<dbReference type="Pfam" id="PF01509">
    <property type="entry name" value="TruB_N"/>
    <property type="match status" value="1"/>
</dbReference>
<dbReference type="SUPFAM" id="SSF55120">
    <property type="entry name" value="Pseudouridine synthase"/>
    <property type="match status" value="1"/>
</dbReference>
<accession>Q9PKU2</accession>
<name>TRUB_CHLMU</name>
<proteinExistence type="inferred from homology"/>
<protein>
    <recommendedName>
        <fullName evidence="1">tRNA pseudouridine synthase B</fullName>
        <ecNumber evidence="1">5.4.99.25</ecNumber>
    </recommendedName>
    <alternativeName>
        <fullName evidence="1">tRNA pseudouridine(55) synthase</fullName>
        <shortName evidence="1">Psi55 synthase</shortName>
    </alternativeName>
    <alternativeName>
        <fullName evidence="1">tRNA pseudouridylate synthase</fullName>
    </alternativeName>
    <alternativeName>
        <fullName evidence="1">tRNA-uridine isomerase</fullName>
    </alternativeName>
</protein>
<gene>
    <name evidence="1" type="primary">truB</name>
    <name type="ordered locus">TC_0369</name>
</gene>
<feature type="chain" id="PRO_0000121815" description="tRNA pseudouridine synthase B">
    <location>
        <begin position="1"/>
        <end position="241"/>
    </location>
</feature>
<feature type="active site" description="Nucleophile" evidence="1">
    <location>
        <position position="45"/>
    </location>
</feature>